<reference evidence="6" key="1">
    <citation type="journal article" date="2007" name="Nature">
        <title>Evolution of genes and genomes on the Drosophila phylogeny.</title>
        <authorList>
            <consortium name="Drosophila 12 genomes consortium"/>
        </authorList>
    </citation>
    <scope>NUCLEOTIDE SEQUENCE [LARGE SCALE GENOMIC DNA]</scope>
    <source>
        <strain evidence="6">Tucson 15010-1051.87</strain>
    </source>
</reference>
<feature type="chain" id="PRO_0000383318" description="F-box/SPRY domain-containing protein 1">
    <location>
        <begin position="1"/>
        <end position="252"/>
    </location>
</feature>
<feature type="domain" description="F-box" evidence="3">
    <location>
        <begin position="1"/>
        <end position="48"/>
    </location>
</feature>
<feature type="domain" description="B30.2/SPRY" evidence="4">
    <location>
        <begin position="58"/>
        <end position="250"/>
    </location>
</feature>
<organism>
    <name type="scientific">Drosophila virilis</name>
    <name type="common">Fruit fly</name>
    <dbReference type="NCBI Taxonomy" id="7244"/>
    <lineage>
        <taxon>Eukaryota</taxon>
        <taxon>Metazoa</taxon>
        <taxon>Ecdysozoa</taxon>
        <taxon>Arthropoda</taxon>
        <taxon>Hexapoda</taxon>
        <taxon>Insecta</taxon>
        <taxon>Pterygota</taxon>
        <taxon>Neoptera</taxon>
        <taxon>Endopterygota</taxon>
        <taxon>Diptera</taxon>
        <taxon>Brachycera</taxon>
        <taxon>Muscomorpha</taxon>
        <taxon>Ephydroidea</taxon>
        <taxon>Drosophilidae</taxon>
        <taxon>Drosophila</taxon>
    </lineage>
</organism>
<protein>
    <recommendedName>
        <fullName evidence="2">F-box/SPRY domain-containing protein 1</fullName>
    </recommendedName>
</protein>
<dbReference type="EMBL" id="CH940648">
    <property type="protein sequence ID" value="EDW60994.1"/>
    <property type="molecule type" value="Genomic_DNA"/>
</dbReference>
<dbReference type="RefSeq" id="XP_002049801.1">
    <property type="nucleotide sequence ID" value="XM_002049765.4"/>
</dbReference>
<dbReference type="SMR" id="B4LMQ3"/>
<dbReference type="FunCoup" id="B4LMQ3">
    <property type="interactions" value="1189"/>
</dbReference>
<dbReference type="STRING" id="7244.B4LMQ3"/>
<dbReference type="EnsemblMetazoa" id="FBtr0237713">
    <property type="protein sequence ID" value="FBpp0236205"/>
    <property type="gene ID" value="FBgn0208906"/>
</dbReference>
<dbReference type="EnsemblMetazoa" id="XM_002049765.3">
    <property type="protein sequence ID" value="XP_002049801.1"/>
    <property type="gene ID" value="LOC6626225"/>
</dbReference>
<dbReference type="GeneID" id="6626225"/>
<dbReference type="KEGG" id="dvi:6626225"/>
<dbReference type="CTD" id="36460"/>
<dbReference type="eggNOG" id="KOG3953">
    <property type="taxonomic scope" value="Eukaryota"/>
</dbReference>
<dbReference type="HOGENOM" id="CLU_046756_1_0_1"/>
<dbReference type="InParanoid" id="B4LMQ3"/>
<dbReference type="OMA" id="ATKRASM"/>
<dbReference type="OrthoDB" id="2398163at2759"/>
<dbReference type="PhylomeDB" id="B4LMQ3"/>
<dbReference type="UniPathway" id="UPA00143"/>
<dbReference type="Proteomes" id="UP000008792">
    <property type="component" value="Unassembled WGS sequence"/>
</dbReference>
<dbReference type="GO" id="GO:0005938">
    <property type="term" value="C:cell cortex"/>
    <property type="evidence" value="ECO:0007669"/>
    <property type="project" value="EnsemblMetazoa"/>
</dbReference>
<dbReference type="GO" id="GO:0031594">
    <property type="term" value="C:neuromuscular junction"/>
    <property type="evidence" value="ECO:0000250"/>
    <property type="project" value="UniProtKB"/>
</dbReference>
<dbReference type="GO" id="GO:0005634">
    <property type="term" value="C:nucleus"/>
    <property type="evidence" value="ECO:0007669"/>
    <property type="project" value="EnsemblMetazoa"/>
</dbReference>
<dbReference type="GO" id="GO:0045495">
    <property type="term" value="C:pole plasm"/>
    <property type="evidence" value="ECO:0007669"/>
    <property type="project" value="EnsemblMetazoa"/>
</dbReference>
<dbReference type="GO" id="GO:0019005">
    <property type="term" value="C:SCF ubiquitin ligase complex"/>
    <property type="evidence" value="ECO:0007669"/>
    <property type="project" value="EnsemblMetazoa"/>
</dbReference>
<dbReference type="GO" id="GO:0010629">
    <property type="term" value="P:negative regulation of gene expression"/>
    <property type="evidence" value="ECO:0007669"/>
    <property type="project" value="EnsemblMetazoa"/>
</dbReference>
<dbReference type="GO" id="GO:0045886">
    <property type="term" value="P:negative regulation of synaptic assembly at neuromuscular junction"/>
    <property type="evidence" value="ECO:0000250"/>
    <property type="project" value="UniProtKB"/>
</dbReference>
<dbReference type="GO" id="GO:0007274">
    <property type="term" value="P:neuromuscular synaptic transmission"/>
    <property type="evidence" value="ECO:0000250"/>
    <property type="project" value="UniProtKB"/>
</dbReference>
<dbReference type="GO" id="GO:0045732">
    <property type="term" value="P:positive regulation of protein catabolic process"/>
    <property type="evidence" value="ECO:0007669"/>
    <property type="project" value="EnsemblMetazoa"/>
</dbReference>
<dbReference type="GO" id="GO:0043161">
    <property type="term" value="P:proteasome-mediated ubiquitin-dependent protein catabolic process"/>
    <property type="evidence" value="ECO:0007669"/>
    <property type="project" value="TreeGrafter"/>
</dbReference>
<dbReference type="GO" id="GO:0016567">
    <property type="term" value="P:protein ubiquitination"/>
    <property type="evidence" value="ECO:0007669"/>
    <property type="project" value="UniProtKB-UniPathway"/>
</dbReference>
<dbReference type="GO" id="GO:0060386">
    <property type="term" value="P:synapse assembly involved in innervation"/>
    <property type="evidence" value="ECO:0007669"/>
    <property type="project" value="TreeGrafter"/>
</dbReference>
<dbReference type="CDD" id="cd12907">
    <property type="entry name" value="SPRY_Fbox"/>
    <property type="match status" value="1"/>
</dbReference>
<dbReference type="FunFam" id="1.20.1280.50:FF:000140">
    <property type="entry name" value="F-box/SPRY domain-containing protein 1"/>
    <property type="match status" value="1"/>
</dbReference>
<dbReference type="FunFam" id="2.60.120.920:FF:000017">
    <property type="entry name" value="F-box/SPRY domain-containing protein 1"/>
    <property type="match status" value="1"/>
</dbReference>
<dbReference type="Gene3D" id="1.20.1280.50">
    <property type="match status" value="1"/>
</dbReference>
<dbReference type="Gene3D" id="2.60.120.920">
    <property type="match status" value="1"/>
</dbReference>
<dbReference type="InterPro" id="IPR001870">
    <property type="entry name" value="B30.2/SPRY"/>
</dbReference>
<dbReference type="InterPro" id="IPR043136">
    <property type="entry name" value="B30.2/SPRY_sf"/>
</dbReference>
<dbReference type="InterPro" id="IPR013320">
    <property type="entry name" value="ConA-like_dom_sf"/>
</dbReference>
<dbReference type="InterPro" id="IPR036047">
    <property type="entry name" value="F-box-like_dom_sf"/>
</dbReference>
<dbReference type="InterPro" id="IPR001810">
    <property type="entry name" value="F-box_dom"/>
</dbReference>
<dbReference type="InterPro" id="IPR050672">
    <property type="entry name" value="FBXO45-Fsn/SPSB_families"/>
</dbReference>
<dbReference type="InterPro" id="IPR003877">
    <property type="entry name" value="SPRY_dom"/>
</dbReference>
<dbReference type="InterPro" id="IPR035784">
    <property type="entry name" value="SPRY_FBXO45"/>
</dbReference>
<dbReference type="PANTHER" id="PTHR12245:SF7">
    <property type="entry name" value="F-BOX_SPRY DOMAIN-CONTAINING PROTEIN 1"/>
    <property type="match status" value="1"/>
</dbReference>
<dbReference type="PANTHER" id="PTHR12245">
    <property type="entry name" value="SPRY DOMAIN CONTAINING SOCS BOX PROTEIN"/>
    <property type="match status" value="1"/>
</dbReference>
<dbReference type="Pfam" id="PF12937">
    <property type="entry name" value="F-box-like"/>
    <property type="match status" value="1"/>
</dbReference>
<dbReference type="Pfam" id="PF00622">
    <property type="entry name" value="SPRY"/>
    <property type="match status" value="1"/>
</dbReference>
<dbReference type="SMART" id="SM00449">
    <property type="entry name" value="SPRY"/>
    <property type="match status" value="1"/>
</dbReference>
<dbReference type="SUPFAM" id="SSF49899">
    <property type="entry name" value="Concanavalin A-like lectins/glucanases"/>
    <property type="match status" value="1"/>
</dbReference>
<dbReference type="SUPFAM" id="SSF81383">
    <property type="entry name" value="F-box domain"/>
    <property type="match status" value="1"/>
</dbReference>
<dbReference type="PROSITE" id="PS50188">
    <property type="entry name" value="B302_SPRY"/>
    <property type="match status" value="1"/>
</dbReference>
<dbReference type="PROSITE" id="PS50181">
    <property type="entry name" value="FBOX"/>
    <property type="match status" value="1"/>
</dbReference>
<gene>
    <name evidence="2" type="primary">Fsn</name>
    <name type="ORF">GJ21788</name>
</gene>
<comment type="function">
    <text evidence="1">Required in the presynaptic motoneuron to down-regulate the levels of wnd and restrain synaptic terminal growth at the neuromuscular junction (NMJ).</text>
</comment>
<comment type="pathway">
    <text evidence="2">Protein modification; protein ubiquitination.</text>
</comment>
<comment type="subunit">
    <text evidence="2">Component of an E3 ubiquitin ligase complex composed of hiw and Fsn.</text>
</comment>
<comment type="subcellular location">
    <subcellularLocation>
        <location evidence="2">Synapse</location>
    </subcellularLocation>
</comment>
<comment type="similarity">
    <text evidence="5">Belongs to the FBXO45/Fsn family.</text>
</comment>
<proteinExistence type="inferred from homology"/>
<accession>B4LMQ3</accession>
<evidence type="ECO:0000250" key="1"/>
<evidence type="ECO:0000250" key="2">
    <source>
        <dbReference type="UniProtKB" id="Q9V6L9"/>
    </source>
</evidence>
<evidence type="ECO:0000255" key="3">
    <source>
        <dbReference type="PROSITE-ProRule" id="PRU00080"/>
    </source>
</evidence>
<evidence type="ECO:0000255" key="4">
    <source>
        <dbReference type="PROSITE-ProRule" id="PRU00548"/>
    </source>
</evidence>
<evidence type="ECO:0000305" key="5"/>
<evidence type="ECO:0000312" key="6">
    <source>
        <dbReference type="EMBL" id="EDW60994.1"/>
    </source>
</evidence>
<keyword id="KW-0524">Neurogenesis</keyword>
<keyword id="KW-1185">Reference proteome</keyword>
<keyword id="KW-0770">Synapse</keyword>
<keyword id="KW-0833">Ubl conjugation pathway</keyword>
<sequence length="252" mass="28624">MVDPLCNYNVLEAIFSYLELNDLYRCSQVCKSWYHFLNDENSDVWRWHCLRKLPKESVKSDLLASVSTYKTKLRAYLHAWSPNDCSRNVYIKPNGFTLHRNPVAQSTDAARGKIGFRQGRHAWEVIWEGPLGTVAVIGISTKEAALQCHGYVALLGSDDQSWGWNLVENHLLHNGDMQGNYPLLNNAPKYQVGERIRVILDCDDNTLSFEKNYEFLGVAFRGLPDKKLYPTVSAVYGNTEVSMVYLGTPLDG</sequence>
<name>FBSP1_DROVI</name>